<dbReference type="EMBL" id="KC412663">
    <property type="protein sequence ID" value="AGF70150.1"/>
    <property type="molecule type" value="mRNA"/>
</dbReference>
<dbReference type="SMR" id="M1NRH7"/>
<dbReference type="VEuPathDB" id="VectorBase:RSAN_034431"/>
<dbReference type="OrthoDB" id="10386469at2759"/>
<dbReference type="GO" id="GO:0005576">
    <property type="term" value="C:extracellular region"/>
    <property type="evidence" value="ECO:0007669"/>
    <property type="project" value="UniProtKB-SubCell"/>
</dbReference>
<dbReference type="Gene3D" id="2.40.128.20">
    <property type="match status" value="1"/>
</dbReference>
<dbReference type="InterPro" id="IPR012674">
    <property type="entry name" value="Calycin"/>
</dbReference>
<comment type="function">
    <text evidence="1 3">Salivary tick protein that modulates host immune response. This protein blocks dendritic cell (DC) differentiation from monocytes (PubMed:23825947). In addition, it inhibits up-regulation of costimulatory molecules and pro-inflammatory cytokines in response to stimuli and promotes up-regulation of co-inhibitory molecules and the anti-inflammatory cytokine interleukin-10. It has a pocket to accomodate cholesterol, which may have immune-modulatory roles, either directly or through interactions with the host gut microbiota (By similarity).</text>
</comment>
<comment type="subunit">
    <text evidence="1">Homodimer; non-disulfide-linked. Each monomer accommodates one molecule of cholesterol in a pocket.</text>
</comment>
<comment type="subcellular location">
    <subcellularLocation>
        <location evidence="1">Secreted</location>
    </subcellularLocation>
</comment>
<comment type="tissue specificity">
    <text evidence="1">Expressed in salivary glands.</text>
</comment>
<comment type="domain">
    <text evidence="1">Each monomer contains a pocket that accomodates cholesterol. Cholesterol derivatives (such as epicholesterol, epicholestanol, epicoprostenol, or 7-dehydrocholesterol) could also fit in the pocket with minor rearrangement of the side chain. Since arthropods are unable to synthesize cholesterol de novo, it is likely that a cholesterol ligand would be bloodmeal-derived.</text>
</comment>
<comment type="similarity">
    <text evidence="4">Belongs to the calycin superfamily. Lipocalin family.</text>
</comment>
<accession>M1NRH7</accession>
<proteinExistence type="evidence at transcript level"/>
<keyword id="KW-1015">Disulfide bond</keyword>
<keyword id="KW-0325">Glycoprotein</keyword>
<keyword id="KW-0964">Secreted</keyword>
<keyword id="KW-0732">Signal</keyword>
<protein>
    <recommendedName>
        <fullName evidence="5">Japanin-like-RS</fullName>
    </recommendedName>
</protein>
<name>JAPL_RHISA</name>
<organism>
    <name type="scientific">Rhipicephalus sanguineus</name>
    <name type="common">Brown dog tick</name>
    <name type="synonym">Ixodes sanguineus</name>
    <dbReference type="NCBI Taxonomy" id="34632"/>
    <lineage>
        <taxon>Eukaryota</taxon>
        <taxon>Metazoa</taxon>
        <taxon>Ecdysozoa</taxon>
        <taxon>Arthropoda</taxon>
        <taxon>Chelicerata</taxon>
        <taxon>Arachnida</taxon>
        <taxon>Acari</taxon>
        <taxon>Parasitiformes</taxon>
        <taxon>Ixodida</taxon>
        <taxon>Ixodoidea</taxon>
        <taxon>Ixodidae</taxon>
        <taxon>Rhipicephalinae</taxon>
        <taxon>Rhipicephalus</taxon>
        <taxon>Rhipicephalus</taxon>
    </lineage>
</organism>
<feature type="signal peptide" evidence="1">
    <location>
        <begin position="1"/>
        <end position="24"/>
    </location>
</feature>
<feature type="chain" id="PRO_5004016532" description="Japanin-like-RS">
    <location>
        <begin position="25"/>
        <end position="176"/>
    </location>
</feature>
<feature type="glycosylation site" description="N-linked (GlcNAc...) asparagine" evidence="2">
    <location>
        <position position="155"/>
    </location>
</feature>
<feature type="disulfide bond" evidence="1">
    <location>
        <begin position="52"/>
        <end position="174"/>
    </location>
</feature>
<feature type="disulfide bond" evidence="1">
    <location>
        <begin position="138"/>
        <end position="162"/>
    </location>
</feature>
<evidence type="ECO:0000250" key="1">
    <source>
        <dbReference type="UniProtKB" id="M1MR49"/>
    </source>
</evidence>
<evidence type="ECO:0000255" key="2">
    <source>
        <dbReference type="PROSITE-ProRule" id="PRU00498"/>
    </source>
</evidence>
<evidence type="ECO:0000269" key="3">
    <source>
    </source>
</evidence>
<evidence type="ECO:0000305" key="4"/>
<evidence type="ECO:0000312" key="5">
    <source>
        <dbReference type="EMBL" id="AGF70150.1"/>
    </source>
</evidence>
<reference evidence="5" key="1">
    <citation type="journal article" date="2013" name="PLoS Pathog.">
        <title>Novel immunomodulators from hard ticks selectively reprogramme human dendritic cell responses.</title>
        <authorList>
            <person name="Preston S.G."/>
            <person name="Majtan J."/>
            <person name="Kouremenou C."/>
            <person name="Rysnik O."/>
            <person name="Burger L.F."/>
            <person name="Cabezas Cruz A."/>
            <person name="Chiong Guzman M."/>
            <person name="Nunn M.A."/>
            <person name="Paesen G.C."/>
            <person name="Nuttall P.A."/>
            <person name="Austyn J.M."/>
        </authorList>
    </citation>
    <scope>NUCLEOTIDE SEQUENCE [MRNA]</scope>
    <scope>FUNCTION</scope>
    <scope>RECOMBINANT EXPRESSION</scope>
    <source>
        <tissue>Salivary gland</tissue>
    </source>
</reference>
<sequence length="176" mass="20551">MKVLLCLVCSFYIIVSSITTMTTGTPSMPAINRQTLYLAAYSSKLFSWNVGCVKTRHLSQEGDWVTRSLIYVFTFDKKPWETKADAFKVKWEPYSPLLRVQASDYVKYNLRAKPEYFIRTYDDDFLLLSDVKESRSPCSLWVTLKYVERIPETINRTFYANCPDPVTVPFDERCYP</sequence>